<dbReference type="EMBL" id="CP001389">
    <property type="protein sequence ID" value="ACP26950.1"/>
    <property type="molecule type" value="Genomic_DNA"/>
</dbReference>
<dbReference type="RefSeq" id="WP_012709698.1">
    <property type="nucleotide sequence ID" value="NC_012587.1"/>
</dbReference>
<dbReference type="RefSeq" id="YP_002827703.1">
    <property type="nucleotide sequence ID" value="NC_012587.1"/>
</dbReference>
<dbReference type="SMR" id="C3MAF7"/>
<dbReference type="STRING" id="394.NGR_c32170"/>
<dbReference type="KEGG" id="rhi:NGR_c32170"/>
<dbReference type="PATRIC" id="fig|394.7.peg.6055"/>
<dbReference type="eggNOG" id="COG0335">
    <property type="taxonomic scope" value="Bacteria"/>
</dbReference>
<dbReference type="HOGENOM" id="CLU_103507_0_2_5"/>
<dbReference type="OrthoDB" id="9803541at2"/>
<dbReference type="Proteomes" id="UP000001054">
    <property type="component" value="Chromosome"/>
</dbReference>
<dbReference type="GO" id="GO:0022625">
    <property type="term" value="C:cytosolic large ribosomal subunit"/>
    <property type="evidence" value="ECO:0007669"/>
    <property type="project" value="TreeGrafter"/>
</dbReference>
<dbReference type="GO" id="GO:0003735">
    <property type="term" value="F:structural constituent of ribosome"/>
    <property type="evidence" value="ECO:0007669"/>
    <property type="project" value="InterPro"/>
</dbReference>
<dbReference type="GO" id="GO:0006412">
    <property type="term" value="P:translation"/>
    <property type="evidence" value="ECO:0007669"/>
    <property type="project" value="UniProtKB-UniRule"/>
</dbReference>
<dbReference type="FunFam" id="2.30.30.790:FF:000001">
    <property type="entry name" value="50S ribosomal protein L19"/>
    <property type="match status" value="1"/>
</dbReference>
<dbReference type="Gene3D" id="2.30.30.790">
    <property type="match status" value="1"/>
</dbReference>
<dbReference type="HAMAP" id="MF_00402">
    <property type="entry name" value="Ribosomal_bL19"/>
    <property type="match status" value="1"/>
</dbReference>
<dbReference type="InterPro" id="IPR001857">
    <property type="entry name" value="Ribosomal_bL19"/>
</dbReference>
<dbReference type="InterPro" id="IPR018257">
    <property type="entry name" value="Ribosomal_bL19_CS"/>
</dbReference>
<dbReference type="InterPro" id="IPR038657">
    <property type="entry name" value="Ribosomal_bL19_sf"/>
</dbReference>
<dbReference type="InterPro" id="IPR008991">
    <property type="entry name" value="Translation_prot_SH3-like_sf"/>
</dbReference>
<dbReference type="NCBIfam" id="TIGR01024">
    <property type="entry name" value="rplS_bact"/>
    <property type="match status" value="1"/>
</dbReference>
<dbReference type="PANTHER" id="PTHR15680:SF9">
    <property type="entry name" value="LARGE RIBOSOMAL SUBUNIT PROTEIN BL19M"/>
    <property type="match status" value="1"/>
</dbReference>
<dbReference type="PANTHER" id="PTHR15680">
    <property type="entry name" value="RIBOSOMAL PROTEIN L19"/>
    <property type="match status" value="1"/>
</dbReference>
<dbReference type="Pfam" id="PF01245">
    <property type="entry name" value="Ribosomal_L19"/>
    <property type="match status" value="1"/>
</dbReference>
<dbReference type="PRINTS" id="PR00061">
    <property type="entry name" value="RIBOSOMALL19"/>
</dbReference>
<dbReference type="SUPFAM" id="SSF50104">
    <property type="entry name" value="Translation proteins SH3-like domain"/>
    <property type="match status" value="1"/>
</dbReference>
<dbReference type="PROSITE" id="PS01015">
    <property type="entry name" value="RIBOSOMAL_L19"/>
    <property type="match status" value="1"/>
</dbReference>
<feature type="chain" id="PRO_1000193870" description="Large ribosomal subunit protein bL19">
    <location>
        <begin position="1"/>
        <end position="176"/>
    </location>
</feature>
<reference key="1">
    <citation type="journal article" date="2009" name="Appl. Environ. Microbiol.">
        <title>Rhizobium sp. strain NGR234 possesses a remarkable number of secretion systems.</title>
        <authorList>
            <person name="Schmeisser C."/>
            <person name="Liesegang H."/>
            <person name="Krysciak D."/>
            <person name="Bakkou N."/>
            <person name="Le Quere A."/>
            <person name="Wollherr A."/>
            <person name="Heinemeyer I."/>
            <person name="Morgenstern B."/>
            <person name="Pommerening-Roeser A."/>
            <person name="Flores M."/>
            <person name="Palacios R."/>
            <person name="Brenner S."/>
            <person name="Gottschalk G."/>
            <person name="Schmitz R.A."/>
            <person name="Broughton W.J."/>
            <person name="Perret X."/>
            <person name="Strittmatter A.W."/>
            <person name="Streit W.R."/>
        </authorList>
    </citation>
    <scope>NUCLEOTIDE SEQUENCE [LARGE SCALE GENOMIC DNA]</scope>
    <source>
        <strain>NBRC 101917 / NGR234</strain>
    </source>
</reference>
<accession>C3MAF7</accession>
<gene>
    <name evidence="1" type="primary">rplS</name>
    <name type="ordered locus">NGR_c32170</name>
</gene>
<protein>
    <recommendedName>
        <fullName evidence="1">Large ribosomal subunit protein bL19</fullName>
    </recommendedName>
    <alternativeName>
        <fullName evidence="2">50S ribosomal protein L19</fullName>
    </alternativeName>
</protein>
<name>RL19_SINFN</name>
<keyword id="KW-1185">Reference proteome</keyword>
<keyword id="KW-0687">Ribonucleoprotein</keyword>
<keyword id="KW-0689">Ribosomal protein</keyword>
<evidence type="ECO:0000255" key="1">
    <source>
        <dbReference type="HAMAP-Rule" id="MF_00402"/>
    </source>
</evidence>
<evidence type="ECO:0000305" key="2"/>
<organism>
    <name type="scientific">Sinorhizobium fredii (strain NBRC 101917 / NGR234)</name>
    <dbReference type="NCBI Taxonomy" id="394"/>
    <lineage>
        <taxon>Bacteria</taxon>
        <taxon>Pseudomonadati</taxon>
        <taxon>Pseudomonadota</taxon>
        <taxon>Alphaproteobacteria</taxon>
        <taxon>Hyphomicrobiales</taxon>
        <taxon>Rhizobiaceae</taxon>
        <taxon>Sinorhizobium/Ensifer group</taxon>
        <taxon>Sinorhizobium</taxon>
    </lineage>
</organism>
<proteinExistence type="inferred from homology"/>
<sequence length="176" mass="19060">MNIIEQLEAEQAAKIAAKRTLPDFSAGDTVRVNVRVVEGSRTRVQAYEGVCIARSGGGLNESFTVRKISYGEGVERVFPVYSPLVESVEVVRRGKVRRAKLYYLRDRRGKSARIVENTGTRARKLNEAERQAVAEEKARIEAEKVAAAQALAAEKAAAEAAEKAAAEAKAAEAAAE</sequence>
<comment type="function">
    <text evidence="1">This protein is located at the 30S-50S ribosomal subunit interface and may play a role in the structure and function of the aminoacyl-tRNA binding site.</text>
</comment>
<comment type="similarity">
    <text evidence="1">Belongs to the bacterial ribosomal protein bL19 family.</text>
</comment>